<keyword id="KW-0028">Amino-acid biosynthesis</keyword>
<keyword id="KW-0963">Cytoplasm</keyword>
<keyword id="KW-0554">One-carbon metabolism</keyword>
<keyword id="KW-0663">Pyridoxal phosphate</keyword>
<keyword id="KW-0808">Transferase</keyword>
<gene>
    <name evidence="1" type="primary">glyA</name>
    <name type="ordered locus">Mchl_3495</name>
</gene>
<organism>
    <name type="scientific">Methylorubrum extorquens (strain CM4 / NCIMB 13688)</name>
    <name type="common">Methylobacterium extorquens</name>
    <dbReference type="NCBI Taxonomy" id="440085"/>
    <lineage>
        <taxon>Bacteria</taxon>
        <taxon>Pseudomonadati</taxon>
        <taxon>Pseudomonadota</taxon>
        <taxon>Alphaproteobacteria</taxon>
        <taxon>Hyphomicrobiales</taxon>
        <taxon>Methylobacteriaceae</taxon>
        <taxon>Methylorubrum</taxon>
    </lineage>
</organism>
<dbReference type="EC" id="2.1.2.1" evidence="1"/>
<dbReference type="EMBL" id="CP001298">
    <property type="protein sequence ID" value="ACK84315.1"/>
    <property type="molecule type" value="Genomic_DNA"/>
</dbReference>
<dbReference type="RefSeq" id="WP_003601128.1">
    <property type="nucleotide sequence ID" value="NC_011757.1"/>
</dbReference>
<dbReference type="SMR" id="B7KVA7"/>
<dbReference type="GeneID" id="72990817"/>
<dbReference type="KEGG" id="mch:Mchl_3495"/>
<dbReference type="HOGENOM" id="CLU_022477_2_1_5"/>
<dbReference type="UniPathway" id="UPA00193"/>
<dbReference type="UniPathway" id="UPA00288">
    <property type="reaction ID" value="UER01023"/>
</dbReference>
<dbReference type="Proteomes" id="UP000002385">
    <property type="component" value="Chromosome"/>
</dbReference>
<dbReference type="GO" id="GO:0005829">
    <property type="term" value="C:cytosol"/>
    <property type="evidence" value="ECO:0007669"/>
    <property type="project" value="TreeGrafter"/>
</dbReference>
<dbReference type="GO" id="GO:0004372">
    <property type="term" value="F:glycine hydroxymethyltransferase activity"/>
    <property type="evidence" value="ECO:0007669"/>
    <property type="project" value="UniProtKB-UniRule"/>
</dbReference>
<dbReference type="GO" id="GO:0030170">
    <property type="term" value="F:pyridoxal phosphate binding"/>
    <property type="evidence" value="ECO:0007669"/>
    <property type="project" value="UniProtKB-UniRule"/>
</dbReference>
<dbReference type="GO" id="GO:0019264">
    <property type="term" value="P:glycine biosynthetic process from serine"/>
    <property type="evidence" value="ECO:0007669"/>
    <property type="project" value="UniProtKB-UniRule"/>
</dbReference>
<dbReference type="GO" id="GO:0035999">
    <property type="term" value="P:tetrahydrofolate interconversion"/>
    <property type="evidence" value="ECO:0007669"/>
    <property type="project" value="UniProtKB-UniRule"/>
</dbReference>
<dbReference type="CDD" id="cd00378">
    <property type="entry name" value="SHMT"/>
    <property type="match status" value="1"/>
</dbReference>
<dbReference type="FunFam" id="3.40.640.10:FF:000001">
    <property type="entry name" value="Serine hydroxymethyltransferase"/>
    <property type="match status" value="1"/>
</dbReference>
<dbReference type="FunFam" id="3.90.1150.10:FF:000003">
    <property type="entry name" value="Serine hydroxymethyltransferase"/>
    <property type="match status" value="1"/>
</dbReference>
<dbReference type="Gene3D" id="3.90.1150.10">
    <property type="entry name" value="Aspartate Aminotransferase, domain 1"/>
    <property type="match status" value="1"/>
</dbReference>
<dbReference type="Gene3D" id="3.40.640.10">
    <property type="entry name" value="Type I PLP-dependent aspartate aminotransferase-like (Major domain)"/>
    <property type="match status" value="1"/>
</dbReference>
<dbReference type="HAMAP" id="MF_00051">
    <property type="entry name" value="SHMT"/>
    <property type="match status" value="1"/>
</dbReference>
<dbReference type="InterPro" id="IPR015424">
    <property type="entry name" value="PyrdxlP-dep_Trfase"/>
</dbReference>
<dbReference type="InterPro" id="IPR015421">
    <property type="entry name" value="PyrdxlP-dep_Trfase_major"/>
</dbReference>
<dbReference type="InterPro" id="IPR015422">
    <property type="entry name" value="PyrdxlP-dep_Trfase_small"/>
</dbReference>
<dbReference type="InterPro" id="IPR001085">
    <property type="entry name" value="Ser_HO-MeTrfase"/>
</dbReference>
<dbReference type="InterPro" id="IPR049943">
    <property type="entry name" value="Ser_HO-MeTrfase-like"/>
</dbReference>
<dbReference type="InterPro" id="IPR019798">
    <property type="entry name" value="Ser_HO-MeTrfase_PLP_BS"/>
</dbReference>
<dbReference type="InterPro" id="IPR039429">
    <property type="entry name" value="SHMT-like_dom"/>
</dbReference>
<dbReference type="NCBIfam" id="NF000586">
    <property type="entry name" value="PRK00011.1"/>
    <property type="match status" value="1"/>
</dbReference>
<dbReference type="PANTHER" id="PTHR11680">
    <property type="entry name" value="SERINE HYDROXYMETHYLTRANSFERASE"/>
    <property type="match status" value="1"/>
</dbReference>
<dbReference type="PANTHER" id="PTHR11680:SF35">
    <property type="entry name" value="SERINE HYDROXYMETHYLTRANSFERASE 1"/>
    <property type="match status" value="1"/>
</dbReference>
<dbReference type="Pfam" id="PF00464">
    <property type="entry name" value="SHMT"/>
    <property type="match status" value="1"/>
</dbReference>
<dbReference type="PIRSF" id="PIRSF000412">
    <property type="entry name" value="SHMT"/>
    <property type="match status" value="1"/>
</dbReference>
<dbReference type="SUPFAM" id="SSF53383">
    <property type="entry name" value="PLP-dependent transferases"/>
    <property type="match status" value="1"/>
</dbReference>
<dbReference type="PROSITE" id="PS00096">
    <property type="entry name" value="SHMT"/>
    <property type="match status" value="1"/>
</dbReference>
<comment type="function">
    <text evidence="1">Catalyzes the reversible interconversion of serine and glycine with tetrahydrofolate (THF) serving as the one-carbon carrier. This reaction serves as the major source of one-carbon groups required for the biosynthesis of purines, thymidylate, methionine, and other important biomolecules. Also exhibits THF-independent aldolase activity toward beta-hydroxyamino acids, producing glycine and aldehydes, via a retro-aldol mechanism.</text>
</comment>
<comment type="catalytic activity">
    <reaction evidence="1">
        <text>(6R)-5,10-methylene-5,6,7,8-tetrahydrofolate + glycine + H2O = (6S)-5,6,7,8-tetrahydrofolate + L-serine</text>
        <dbReference type="Rhea" id="RHEA:15481"/>
        <dbReference type="ChEBI" id="CHEBI:15377"/>
        <dbReference type="ChEBI" id="CHEBI:15636"/>
        <dbReference type="ChEBI" id="CHEBI:33384"/>
        <dbReference type="ChEBI" id="CHEBI:57305"/>
        <dbReference type="ChEBI" id="CHEBI:57453"/>
        <dbReference type="EC" id="2.1.2.1"/>
    </reaction>
</comment>
<comment type="cofactor">
    <cofactor evidence="1">
        <name>pyridoxal 5'-phosphate</name>
        <dbReference type="ChEBI" id="CHEBI:597326"/>
    </cofactor>
</comment>
<comment type="pathway">
    <text evidence="1">One-carbon metabolism; tetrahydrofolate interconversion.</text>
</comment>
<comment type="pathway">
    <text evidence="1">Amino-acid biosynthesis; glycine biosynthesis; glycine from L-serine: step 1/1.</text>
</comment>
<comment type="subunit">
    <text evidence="1">Homodimer.</text>
</comment>
<comment type="subcellular location">
    <subcellularLocation>
        <location evidence="1">Cytoplasm</location>
    </subcellularLocation>
</comment>
<comment type="similarity">
    <text evidence="1">Belongs to the SHMT family.</text>
</comment>
<sequence>MSAGTATDTTDLDSFFSAHLAETDPEIAKAISQELGRQQHEIELIASENIVSRAVLEAQGSVLTNKYAEGYPGRRYYGGCQFVDIAEELAIDRAKRLFGCGFANVQPNSGSQANQGVFMALMQPGDTFLGLDLAAGGHLTHGAPPNVSGKWFKPVSYTVRREDQRIDMEQVERLAQEHKPKVIIAGGSGYPRHWDFAKFREIADSVGAYFFVDMAHFAGLVAAGLHPSPFPHAHVATTTTHKTLRGPRGGMILTNDEALAKKFNSAIFPGLQGGPLMHVIAAKAVAFGEALKPEFKIYAKQVIDNARALADTIISGGYDITSGGTDNHLMLVDLQKKGLTGKAAEAALSRADITCNKNGVPFDPQKPTITSGIRLGTPASTTRGFGVAEFKQVGSLIVQVLDGIAEKGDGGDAAVEAAVKEKVHALTDRFPIYA</sequence>
<accession>B7KVA7</accession>
<protein>
    <recommendedName>
        <fullName evidence="1">Serine hydroxymethyltransferase</fullName>
        <shortName evidence="1">SHMT</shortName>
        <shortName evidence="1">Serine methylase</shortName>
        <ecNumber evidence="1">2.1.2.1</ecNumber>
    </recommendedName>
</protein>
<evidence type="ECO:0000255" key="1">
    <source>
        <dbReference type="HAMAP-Rule" id="MF_00051"/>
    </source>
</evidence>
<reference key="1">
    <citation type="submission" date="2008-12" db="EMBL/GenBank/DDBJ databases">
        <title>Complete sequence of chromosome of Methylobacterium chloromethanicum CM4.</title>
        <authorList>
            <consortium name="US DOE Joint Genome Institute"/>
            <person name="Lucas S."/>
            <person name="Copeland A."/>
            <person name="Lapidus A."/>
            <person name="Glavina del Rio T."/>
            <person name="Dalin E."/>
            <person name="Tice H."/>
            <person name="Bruce D."/>
            <person name="Goodwin L."/>
            <person name="Pitluck S."/>
            <person name="Chertkov O."/>
            <person name="Brettin T."/>
            <person name="Detter J.C."/>
            <person name="Han C."/>
            <person name="Larimer F."/>
            <person name="Land M."/>
            <person name="Hauser L."/>
            <person name="Kyrpides N."/>
            <person name="Mikhailova N."/>
            <person name="Marx C."/>
            <person name="Richardson P."/>
        </authorList>
    </citation>
    <scope>NUCLEOTIDE SEQUENCE [LARGE SCALE GENOMIC DNA]</scope>
    <source>
        <strain>CM4 / NCIMB 13688</strain>
    </source>
</reference>
<proteinExistence type="inferred from homology"/>
<name>GLYA_METC4</name>
<feature type="chain" id="PRO_1000117643" description="Serine hydroxymethyltransferase">
    <location>
        <begin position="1"/>
        <end position="434"/>
    </location>
</feature>
<feature type="binding site" evidence="1">
    <location>
        <position position="133"/>
    </location>
    <ligand>
        <name>(6S)-5,6,7,8-tetrahydrofolate</name>
        <dbReference type="ChEBI" id="CHEBI:57453"/>
    </ligand>
</feature>
<feature type="binding site" evidence="1">
    <location>
        <begin position="137"/>
        <end position="139"/>
    </location>
    <ligand>
        <name>(6S)-5,6,7,8-tetrahydrofolate</name>
        <dbReference type="ChEBI" id="CHEBI:57453"/>
    </ligand>
</feature>
<feature type="site" description="Plays an important role in substrate specificity" evidence="1">
    <location>
        <position position="241"/>
    </location>
</feature>
<feature type="modified residue" description="N6-(pyridoxal phosphate)lysine" evidence="1">
    <location>
        <position position="242"/>
    </location>
</feature>